<dbReference type="EC" id="2.1.1.228" evidence="1"/>
<dbReference type="EMBL" id="AE017349">
    <property type="protein sequence ID" value="AAW45684.1"/>
    <property type="molecule type" value="Genomic_DNA"/>
</dbReference>
<dbReference type="RefSeq" id="XP_572991.1">
    <property type="nucleotide sequence ID" value="XM_572991.1"/>
</dbReference>
<dbReference type="SMR" id="Q5KBP2"/>
<dbReference type="FunCoup" id="Q5KBP2">
    <property type="interactions" value="341"/>
</dbReference>
<dbReference type="STRING" id="214684.Q5KBP2"/>
<dbReference type="PaxDb" id="214684-Q5KBP2"/>
<dbReference type="EnsemblFungi" id="AAW45684">
    <property type="protein sequence ID" value="AAW45684"/>
    <property type="gene ID" value="CNI01900"/>
</dbReference>
<dbReference type="GeneID" id="3259675"/>
<dbReference type="KEGG" id="cne:CNI01900"/>
<dbReference type="VEuPathDB" id="FungiDB:CNI01900"/>
<dbReference type="eggNOG" id="KOG2078">
    <property type="taxonomic scope" value="Eukaryota"/>
</dbReference>
<dbReference type="HOGENOM" id="CLU_022610_2_2_1"/>
<dbReference type="InParanoid" id="Q5KBP2"/>
<dbReference type="OMA" id="VGSHSQF"/>
<dbReference type="OrthoDB" id="408788at2759"/>
<dbReference type="Proteomes" id="UP000002149">
    <property type="component" value="Chromosome 9"/>
</dbReference>
<dbReference type="GO" id="GO:0005737">
    <property type="term" value="C:cytoplasm"/>
    <property type="evidence" value="ECO:0000318"/>
    <property type="project" value="GO_Central"/>
</dbReference>
<dbReference type="GO" id="GO:0005759">
    <property type="term" value="C:mitochondrial matrix"/>
    <property type="evidence" value="ECO:0000318"/>
    <property type="project" value="GO_Central"/>
</dbReference>
<dbReference type="GO" id="GO:0005634">
    <property type="term" value="C:nucleus"/>
    <property type="evidence" value="ECO:0007669"/>
    <property type="project" value="UniProtKB-SubCell"/>
</dbReference>
<dbReference type="GO" id="GO:0052906">
    <property type="term" value="F:tRNA (guanine(37)-N1)-methyltransferase activity"/>
    <property type="evidence" value="ECO:0007669"/>
    <property type="project" value="UniProtKB-UniRule"/>
</dbReference>
<dbReference type="GO" id="GO:0008175">
    <property type="term" value="F:tRNA methyltransferase activity"/>
    <property type="evidence" value="ECO:0000318"/>
    <property type="project" value="GO_Central"/>
</dbReference>
<dbReference type="GO" id="GO:0070901">
    <property type="term" value="P:mitochondrial tRNA methylation"/>
    <property type="evidence" value="ECO:0000318"/>
    <property type="project" value="GO_Central"/>
</dbReference>
<dbReference type="GO" id="GO:0002939">
    <property type="term" value="P:tRNA N1-guanine methylation"/>
    <property type="evidence" value="ECO:0000318"/>
    <property type="project" value="GO_Central"/>
</dbReference>
<dbReference type="CDD" id="cd02440">
    <property type="entry name" value="AdoMet_MTases"/>
    <property type="match status" value="1"/>
</dbReference>
<dbReference type="FunFam" id="3.30.300.110:FF:000001">
    <property type="entry name" value="tRNA (guanine(37)-N1)-methyltransferase"/>
    <property type="match status" value="1"/>
</dbReference>
<dbReference type="Gene3D" id="3.30.300.110">
    <property type="entry name" value="Met-10+ protein-like domains"/>
    <property type="match status" value="1"/>
</dbReference>
<dbReference type="Gene3D" id="3.40.50.150">
    <property type="entry name" value="Vaccinia Virus protein VP39"/>
    <property type="match status" value="1"/>
</dbReference>
<dbReference type="HAMAP" id="MF_03152">
    <property type="entry name" value="TRM5"/>
    <property type="match status" value="1"/>
</dbReference>
<dbReference type="InterPro" id="IPR030382">
    <property type="entry name" value="MeTrfase_TRM5/TYW2"/>
</dbReference>
<dbReference type="InterPro" id="IPR029063">
    <property type="entry name" value="SAM-dependent_MTases_sf"/>
</dbReference>
<dbReference type="InterPro" id="IPR056743">
    <property type="entry name" value="TRM5-TYW2-like_MTfase"/>
</dbReference>
<dbReference type="InterPro" id="IPR056744">
    <property type="entry name" value="TRM5/TYW2-like_N"/>
</dbReference>
<dbReference type="InterPro" id="IPR025792">
    <property type="entry name" value="tRNA_Gua_MeTrfase_euk"/>
</dbReference>
<dbReference type="PANTHER" id="PTHR23245:SF36">
    <property type="entry name" value="TRNA (GUANINE(37)-N1)-METHYLTRANSFERASE"/>
    <property type="match status" value="1"/>
</dbReference>
<dbReference type="PANTHER" id="PTHR23245">
    <property type="entry name" value="TRNA METHYLTRANSFERASE"/>
    <property type="match status" value="1"/>
</dbReference>
<dbReference type="Pfam" id="PF02475">
    <property type="entry name" value="TRM5-TYW2_MTfase"/>
    <property type="match status" value="1"/>
</dbReference>
<dbReference type="Pfam" id="PF25133">
    <property type="entry name" value="TYW2_N_2"/>
    <property type="match status" value="1"/>
</dbReference>
<dbReference type="SUPFAM" id="SSF53335">
    <property type="entry name" value="S-adenosyl-L-methionine-dependent methyltransferases"/>
    <property type="match status" value="1"/>
</dbReference>
<dbReference type="PROSITE" id="PS51684">
    <property type="entry name" value="SAM_MT_TRM5_TYW2"/>
    <property type="match status" value="1"/>
</dbReference>
<name>TRM5_CRYNJ</name>
<comment type="function">
    <text evidence="1">Specifically methylates the N1 position of guanosine-37 in various cytoplasmic and mitochondrial tRNAs. Methylation is not dependent on the nature of the nucleoside 5' of the target nucleoside. This is the first step in the biosynthesis of wybutosine (yW), a modified base adjacent to the anticodon of tRNAs and required for accurate decoding.</text>
</comment>
<comment type="catalytic activity">
    <reaction evidence="1">
        <text>guanosine(37) in tRNA + S-adenosyl-L-methionine = N(1)-methylguanosine(37) in tRNA + S-adenosyl-L-homocysteine + H(+)</text>
        <dbReference type="Rhea" id="RHEA:36899"/>
        <dbReference type="Rhea" id="RHEA-COMP:10145"/>
        <dbReference type="Rhea" id="RHEA-COMP:10147"/>
        <dbReference type="ChEBI" id="CHEBI:15378"/>
        <dbReference type="ChEBI" id="CHEBI:57856"/>
        <dbReference type="ChEBI" id="CHEBI:59789"/>
        <dbReference type="ChEBI" id="CHEBI:73542"/>
        <dbReference type="ChEBI" id="CHEBI:74269"/>
        <dbReference type="EC" id="2.1.1.228"/>
    </reaction>
</comment>
<comment type="subunit">
    <text evidence="1">Monomer.</text>
</comment>
<comment type="subcellular location">
    <subcellularLocation>
        <location evidence="1">Mitochondrion matrix</location>
    </subcellularLocation>
    <subcellularLocation>
        <location evidence="1">Nucleus</location>
    </subcellularLocation>
    <subcellularLocation>
        <location evidence="1">Cytoplasm</location>
    </subcellularLocation>
    <text evidence="1">Predominantly in the mitochondria and in the nucleus.</text>
</comment>
<comment type="similarity">
    <text evidence="3">Belongs to the class I-like SAM-binding methyltransferase superfamily. TRM5/TYW2 family.</text>
</comment>
<proteinExistence type="inferred from homology"/>
<reference key="1">
    <citation type="journal article" date="2005" name="Science">
        <title>The genome of the basidiomycetous yeast and human pathogen Cryptococcus neoformans.</title>
        <authorList>
            <person name="Loftus B.J."/>
            <person name="Fung E."/>
            <person name="Roncaglia P."/>
            <person name="Rowley D."/>
            <person name="Amedeo P."/>
            <person name="Bruno D."/>
            <person name="Vamathevan J."/>
            <person name="Miranda M."/>
            <person name="Anderson I.J."/>
            <person name="Fraser J.A."/>
            <person name="Allen J.E."/>
            <person name="Bosdet I.E."/>
            <person name="Brent M.R."/>
            <person name="Chiu R."/>
            <person name="Doering T.L."/>
            <person name="Donlin M.J."/>
            <person name="D'Souza C.A."/>
            <person name="Fox D.S."/>
            <person name="Grinberg V."/>
            <person name="Fu J."/>
            <person name="Fukushima M."/>
            <person name="Haas B.J."/>
            <person name="Huang J.C."/>
            <person name="Janbon G."/>
            <person name="Jones S.J.M."/>
            <person name="Koo H.L."/>
            <person name="Krzywinski M.I."/>
            <person name="Kwon-Chung K.J."/>
            <person name="Lengeler K.B."/>
            <person name="Maiti R."/>
            <person name="Marra M.A."/>
            <person name="Marra R.E."/>
            <person name="Mathewson C.A."/>
            <person name="Mitchell T.G."/>
            <person name="Pertea M."/>
            <person name="Riggs F.R."/>
            <person name="Salzberg S.L."/>
            <person name="Schein J.E."/>
            <person name="Shvartsbeyn A."/>
            <person name="Shin H."/>
            <person name="Shumway M."/>
            <person name="Specht C.A."/>
            <person name="Suh B.B."/>
            <person name="Tenney A."/>
            <person name="Utterback T.R."/>
            <person name="Wickes B.L."/>
            <person name="Wortman J.R."/>
            <person name="Wye N.H."/>
            <person name="Kronstad J.W."/>
            <person name="Lodge J.K."/>
            <person name="Heitman J."/>
            <person name="Davis R.W."/>
            <person name="Fraser C.M."/>
            <person name="Hyman R.W."/>
        </authorList>
    </citation>
    <scope>NUCLEOTIDE SEQUENCE [LARGE SCALE GENOMIC DNA]</scope>
    <source>
        <strain>JEC21 / ATCC MYA-565</strain>
    </source>
</reference>
<protein>
    <recommendedName>
        <fullName evidence="1">tRNA (guanine(37)-N(1))-methyltransferase</fullName>
        <ecNumber evidence="1">2.1.1.228</ecNumber>
    </recommendedName>
    <alternativeName>
        <fullName evidence="1">M1G-methyltransferase</fullName>
    </alternativeName>
    <alternativeName>
        <fullName evidence="1">tRNA [GM37] methyltransferase</fullName>
    </alternativeName>
    <alternativeName>
        <fullName evidence="1">tRNA methyltransferase 5</fullName>
    </alternativeName>
</protein>
<accession>Q5KBP2</accession>
<feature type="transit peptide" description="Mitochondrion" evidence="1">
    <location>
        <begin position="1"/>
        <end position="59"/>
    </location>
</feature>
<feature type="chain" id="PRO_0000414164" description="tRNA (guanine(37)-N(1))-methyltransferase">
    <location>
        <begin position="60"/>
        <end position="543"/>
    </location>
</feature>
<feature type="region of interest" description="Disordered" evidence="2">
    <location>
        <begin position="366"/>
        <end position="405"/>
    </location>
</feature>
<feature type="binding site" evidence="1">
    <location>
        <position position="282"/>
    </location>
    <ligand>
        <name>S-adenosyl-L-methionine</name>
        <dbReference type="ChEBI" id="CHEBI:59789"/>
    </ligand>
</feature>
<feature type="binding site" evidence="1">
    <location>
        <begin position="320"/>
        <end position="321"/>
    </location>
    <ligand>
        <name>S-adenosyl-L-methionine</name>
        <dbReference type="ChEBI" id="CHEBI:59789"/>
    </ligand>
</feature>
<feature type="binding site" evidence="1">
    <location>
        <begin position="348"/>
        <end position="349"/>
    </location>
    <ligand>
        <name>S-adenosyl-L-methionine</name>
        <dbReference type="ChEBI" id="CHEBI:59789"/>
    </ligand>
</feature>
<feature type="binding site" evidence="1">
    <location>
        <position position="431"/>
    </location>
    <ligand>
        <name>S-adenosyl-L-methionine</name>
        <dbReference type="ChEBI" id="CHEBI:59789"/>
    </ligand>
</feature>
<organism>
    <name type="scientific">Cryptococcus neoformans var. neoformans serotype D (strain JEC21 / ATCC MYA-565)</name>
    <name type="common">Filobasidiella neoformans</name>
    <dbReference type="NCBI Taxonomy" id="214684"/>
    <lineage>
        <taxon>Eukaryota</taxon>
        <taxon>Fungi</taxon>
        <taxon>Dikarya</taxon>
        <taxon>Basidiomycota</taxon>
        <taxon>Agaricomycotina</taxon>
        <taxon>Tremellomycetes</taxon>
        <taxon>Tremellales</taxon>
        <taxon>Cryptococcaceae</taxon>
        <taxon>Cryptococcus</taxon>
        <taxon>Cryptococcus neoformans species complex</taxon>
    </lineage>
</organism>
<evidence type="ECO:0000255" key="1">
    <source>
        <dbReference type="HAMAP-Rule" id="MF_03152"/>
    </source>
</evidence>
<evidence type="ECO:0000256" key="2">
    <source>
        <dbReference type="SAM" id="MobiDB-lite"/>
    </source>
</evidence>
<evidence type="ECO:0000305" key="3"/>
<sequence length="543" mass="61029">MLKSLCFVIRPAIVSRPQFRLPTIARLSLRQFQNQPQSVGFFTMAPLETRALALSPSATICPPSRIGTTELDRSAFDLDVQILSAVVEPGMIGKLRSHPSLKDLVLDLPKTKPIVECPAGLAPVAARDVKGLKLLRFHLSKESELPEEAKEVLKGAKALVKEVVRLGYDNWNASEILGACLPTTKSEDIPSSFTTTGHIGHMNLREEWLPFRYLIGQVVLDKNPGLRTIVNKLDTIHAQFRYFDMEVIAGDNDYIATVNESGCSFTFNFSNVYWNSRLHHEHERLISLFPPGCVIADVMAGVGPFAIPAAKKGCYVLGNDLNPESVKWMRENRLRNKVEPTLRVSEIDGFEFIRIAPLEVWTRPFDPAPPPKVSNRQRDREAKEARRKREQAKAAGQPVTETAPMSIPSQEVAIKPHPPQPPKLISHFIMNLPDSAITFLPSYVSCYTPLLAERSFIDEYGGEEEAKRKVEMPMVHCYCFTKEIEIGKAEIDILQRASTNLSFNLTPQVENYNLHHVRSVAPNKDMYCLSFRLPREVAFRHNG</sequence>
<keyword id="KW-0963">Cytoplasm</keyword>
<keyword id="KW-0489">Methyltransferase</keyword>
<keyword id="KW-0496">Mitochondrion</keyword>
<keyword id="KW-0539">Nucleus</keyword>
<keyword id="KW-1185">Reference proteome</keyword>
<keyword id="KW-0949">S-adenosyl-L-methionine</keyword>
<keyword id="KW-0808">Transferase</keyword>
<keyword id="KW-0809">Transit peptide</keyword>
<keyword id="KW-0819">tRNA processing</keyword>
<gene>
    <name evidence="1" type="primary">TRM5</name>
    <name type="ordered locus">CNI01900</name>
</gene>